<protein>
    <recommendedName>
        <fullName evidence="1">Small ribosomal subunit protein uS19</fullName>
    </recommendedName>
    <alternativeName>
        <fullName evidence="2">30S ribosomal protein S19</fullName>
    </alternativeName>
</protein>
<name>RS19_TRIL1</name>
<accession>B3E7T9</accession>
<proteinExistence type="inferred from homology"/>
<evidence type="ECO:0000255" key="1">
    <source>
        <dbReference type="HAMAP-Rule" id="MF_00531"/>
    </source>
</evidence>
<evidence type="ECO:0000305" key="2"/>
<dbReference type="EMBL" id="CP001089">
    <property type="protein sequence ID" value="ACD95071.1"/>
    <property type="molecule type" value="Genomic_DNA"/>
</dbReference>
<dbReference type="RefSeq" id="WP_012469416.1">
    <property type="nucleotide sequence ID" value="NC_010814.1"/>
</dbReference>
<dbReference type="SMR" id="B3E7T9"/>
<dbReference type="STRING" id="398767.Glov_1350"/>
<dbReference type="KEGG" id="glo:Glov_1350"/>
<dbReference type="eggNOG" id="COG0185">
    <property type="taxonomic scope" value="Bacteria"/>
</dbReference>
<dbReference type="HOGENOM" id="CLU_144911_0_1_7"/>
<dbReference type="OrthoDB" id="9797833at2"/>
<dbReference type="Proteomes" id="UP000002420">
    <property type="component" value="Chromosome"/>
</dbReference>
<dbReference type="GO" id="GO:0005737">
    <property type="term" value="C:cytoplasm"/>
    <property type="evidence" value="ECO:0007669"/>
    <property type="project" value="UniProtKB-ARBA"/>
</dbReference>
<dbReference type="GO" id="GO:0015935">
    <property type="term" value="C:small ribosomal subunit"/>
    <property type="evidence" value="ECO:0007669"/>
    <property type="project" value="InterPro"/>
</dbReference>
<dbReference type="GO" id="GO:0019843">
    <property type="term" value="F:rRNA binding"/>
    <property type="evidence" value="ECO:0007669"/>
    <property type="project" value="UniProtKB-UniRule"/>
</dbReference>
<dbReference type="GO" id="GO:0003735">
    <property type="term" value="F:structural constituent of ribosome"/>
    <property type="evidence" value="ECO:0007669"/>
    <property type="project" value="InterPro"/>
</dbReference>
<dbReference type="GO" id="GO:0000028">
    <property type="term" value="P:ribosomal small subunit assembly"/>
    <property type="evidence" value="ECO:0007669"/>
    <property type="project" value="TreeGrafter"/>
</dbReference>
<dbReference type="GO" id="GO:0006412">
    <property type="term" value="P:translation"/>
    <property type="evidence" value="ECO:0007669"/>
    <property type="project" value="UniProtKB-UniRule"/>
</dbReference>
<dbReference type="FunFam" id="3.30.860.10:FF:000001">
    <property type="entry name" value="30S ribosomal protein S19"/>
    <property type="match status" value="1"/>
</dbReference>
<dbReference type="Gene3D" id="3.30.860.10">
    <property type="entry name" value="30s Ribosomal Protein S19, Chain A"/>
    <property type="match status" value="1"/>
</dbReference>
<dbReference type="HAMAP" id="MF_00531">
    <property type="entry name" value="Ribosomal_uS19"/>
    <property type="match status" value="1"/>
</dbReference>
<dbReference type="InterPro" id="IPR002222">
    <property type="entry name" value="Ribosomal_uS19"/>
</dbReference>
<dbReference type="InterPro" id="IPR005732">
    <property type="entry name" value="Ribosomal_uS19_bac-type"/>
</dbReference>
<dbReference type="InterPro" id="IPR020934">
    <property type="entry name" value="Ribosomal_uS19_CS"/>
</dbReference>
<dbReference type="InterPro" id="IPR023575">
    <property type="entry name" value="Ribosomal_uS19_SF"/>
</dbReference>
<dbReference type="NCBIfam" id="TIGR01050">
    <property type="entry name" value="rpsS_bact"/>
    <property type="match status" value="1"/>
</dbReference>
<dbReference type="PANTHER" id="PTHR11880">
    <property type="entry name" value="RIBOSOMAL PROTEIN S19P FAMILY MEMBER"/>
    <property type="match status" value="1"/>
</dbReference>
<dbReference type="PANTHER" id="PTHR11880:SF8">
    <property type="entry name" value="SMALL RIBOSOMAL SUBUNIT PROTEIN US19M"/>
    <property type="match status" value="1"/>
</dbReference>
<dbReference type="Pfam" id="PF00203">
    <property type="entry name" value="Ribosomal_S19"/>
    <property type="match status" value="1"/>
</dbReference>
<dbReference type="PIRSF" id="PIRSF002144">
    <property type="entry name" value="Ribosomal_S19"/>
    <property type="match status" value="1"/>
</dbReference>
<dbReference type="PRINTS" id="PR00975">
    <property type="entry name" value="RIBOSOMALS19"/>
</dbReference>
<dbReference type="SUPFAM" id="SSF54570">
    <property type="entry name" value="Ribosomal protein S19"/>
    <property type="match status" value="1"/>
</dbReference>
<dbReference type="PROSITE" id="PS00323">
    <property type="entry name" value="RIBOSOMAL_S19"/>
    <property type="match status" value="1"/>
</dbReference>
<comment type="function">
    <text evidence="1">Protein S19 forms a complex with S13 that binds strongly to the 16S ribosomal RNA.</text>
</comment>
<comment type="similarity">
    <text evidence="1">Belongs to the universal ribosomal protein uS19 family.</text>
</comment>
<organism>
    <name type="scientific">Trichlorobacter lovleyi (strain ATCC BAA-1151 / DSM 17278 / SZ)</name>
    <name type="common">Geobacter lovleyi</name>
    <dbReference type="NCBI Taxonomy" id="398767"/>
    <lineage>
        <taxon>Bacteria</taxon>
        <taxon>Pseudomonadati</taxon>
        <taxon>Thermodesulfobacteriota</taxon>
        <taxon>Desulfuromonadia</taxon>
        <taxon>Geobacterales</taxon>
        <taxon>Geobacteraceae</taxon>
        <taxon>Trichlorobacter</taxon>
    </lineage>
</organism>
<gene>
    <name evidence="1" type="primary">rpsS</name>
    <name type="ordered locus">Glov_1350</name>
</gene>
<feature type="chain" id="PRO_1000127984" description="Small ribosomal subunit protein uS19">
    <location>
        <begin position="1"/>
        <end position="92"/>
    </location>
</feature>
<sequence>MARSIKKGPFVDGHLMKKVETEGPNSKKIIKTWSRRSTITPEFIGVSLAVHNGKKFIPVFVTENMVGHKLGEFSPTRTFHGHAADKKSKVKK</sequence>
<reference key="1">
    <citation type="submission" date="2008-05" db="EMBL/GenBank/DDBJ databases">
        <title>Complete sequence of chromosome of Geobacter lovleyi SZ.</title>
        <authorList>
            <consortium name="US DOE Joint Genome Institute"/>
            <person name="Lucas S."/>
            <person name="Copeland A."/>
            <person name="Lapidus A."/>
            <person name="Glavina del Rio T."/>
            <person name="Dalin E."/>
            <person name="Tice H."/>
            <person name="Bruce D."/>
            <person name="Goodwin L."/>
            <person name="Pitluck S."/>
            <person name="Chertkov O."/>
            <person name="Meincke L."/>
            <person name="Brettin T."/>
            <person name="Detter J.C."/>
            <person name="Han C."/>
            <person name="Tapia R."/>
            <person name="Kuske C.R."/>
            <person name="Schmutz J."/>
            <person name="Larimer F."/>
            <person name="Land M."/>
            <person name="Hauser L."/>
            <person name="Kyrpides N."/>
            <person name="Mikhailova N."/>
            <person name="Sung Y."/>
            <person name="Fletcher K.E."/>
            <person name="Ritalahti K.M."/>
            <person name="Loeffler F.E."/>
            <person name="Richardson P."/>
        </authorList>
    </citation>
    <scope>NUCLEOTIDE SEQUENCE [LARGE SCALE GENOMIC DNA]</scope>
    <source>
        <strain>ATCC BAA-1151 / DSM 17278 / SZ</strain>
    </source>
</reference>
<keyword id="KW-1185">Reference proteome</keyword>
<keyword id="KW-0687">Ribonucleoprotein</keyword>
<keyword id="KW-0689">Ribosomal protein</keyword>
<keyword id="KW-0694">RNA-binding</keyword>
<keyword id="KW-0699">rRNA-binding</keyword>